<evidence type="ECO:0000250" key="1">
    <source>
        <dbReference type="UniProtKB" id="Q91VX9"/>
    </source>
</evidence>
<evidence type="ECO:0000255" key="2"/>
<evidence type="ECO:0000269" key="3">
    <source>
    </source>
</evidence>
<evidence type="ECO:0000269" key="4">
    <source>
    </source>
</evidence>
<evidence type="ECO:0000303" key="5">
    <source>
    </source>
</evidence>
<evidence type="ECO:0000305" key="6"/>
<evidence type="ECO:0000312" key="7">
    <source>
        <dbReference type="HGNC" id="HGNC:25826"/>
    </source>
</evidence>
<organism>
    <name type="scientific">Homo sapiens</name>
    <name type="common">Human</name>
    <dbReference type="NCBI Taxonomy" id="9606"/>
    <lineage>
        <taxon>Eukaryota</taxon>
        <taxon>Metazoa</taxon>
        <taxon>Chordata</taxon>
        <taxon>Craniata</taxon>
        <taxon>Vertebrata</taxon>
        <taxon>Euteleostomi</taxon>
        <taxon>Mammalia</taxon>
        <taxon>Eutheria</taxon>
        <taxon>Euarchontoglires</taxon>
        <taxon>Primates</taxon>
        <taxon>Haplorrhini</taxon>
        <taxon>Catarrhini</taxon>
        <taxon>Hominidae</taxon>
        <taxon>Homo</taxon>
    </lineage>
</organism>
<accession>Q9H0V1</accession>
<accession>A4D0T9</accession>
<accession>B4DDS0</accession>
<accession>Q8NEK4</accession>
<accession>Q9H8J2</accession>
<protein>
    <recommendedName>
        <fullName>Transmembrane protein 168</fullName>
    </recommendedName>
</protein>
<keyword id="KW-0025">Alternative splicing</keyword>
<keyword id="KW-0325">Glycoprotein</keyword>
<keyword id="KW-0472">Membrane</keyword>
<keyword id="KW-0539">Nucleus</keyword>
<keyword id="KW-1267">Proteomics identification</keyword>
<keyword id="KW-1185">Reference proteome</keyword>
<keyword id="KW-0812">Transmembrane</keyword>
<keyword id="KW-1133">Transmembrane helix</keyword>
<gene>
    <name evidence="7" type="primary">TMEM168</name>
</gene>
<name>TM168_HUMAN</name>
<proteinExistence type="evidence at protein level"/>
<comment type="function">
    <text evidence="1 4">Plays a key role in maintaining the cardiac electrical stability by modulating cell surface expression of SCN5A (PubMed:32175648). May play a role in the modulation of anxiety behavior by regulating GABAergic neuronal system in the nucleus accumbens (By similarity).</text>
</comment>
<comment type="subcellular location">
    <subcellularLocation>
        <location evidence="4">Nucleus membrane</location>
        <topology evidence="2">Multi-pass membrane protein</topology>
    </subcellularLocation>
</comment>
<comment type="alternative products">
    <event type="alternative splicing"/>
    <isoform>
        <id>Q9H0V1-1</id>
        <name>1</name>
        <sequence type="displayed"/>
    </isoform>
    <isoform>
        <id>Q9H0V1-2</id>
        <name>2</name>
        <sequence type="described" ref="VSP_056846"/>
    </isoform>
</comment>
<comment type="induction">
    <text evidence="3">Overexpressed in glioblastoma multiforme (GBM) patients.</text>
</comment>
<comment type="similarity">
    <text evidence="6">Belongs to the TMEM168 family.</text>
</comment>
<comment type="sequence caution" evidence="6">
    <conflict type="erroneous initiation">
        <sequence resource="EMBL-CDS" id="AAQ96836"/>
    </conflict>
    <text>Truncated N-terminus.</text>
</comment>
<comment type="sequence caution" evidence="6">
    <conflict type="erroneous initiation">
        <sequence resource="EMBL-CDS" id="BAB14624"/>
    </conflict>
    <text>Truncated N-terminus.</text>
</comment>
<reference key="1">
    <citation type="journal article" date="2001" name="Genome Res.">
        <title>Towards a catalog of human genes and proteins: sequencing and analysis of 500 novel complete protein coding human cDNAs.</title>
        <authorList>
            <person name="Wiemann S."/>
            <person name="Weil B."/>
            <person name="Wellenreuther R."/>
            <person name="Gassenhuber J."/>
            <person name="Glassl S."/>
            <person name="Ansorge W."/>
            <person name="Boecher M."/>
            <person name="Bloecker H."/>
            <person name="Bauersachs S."/>
            <person name="Blum H."/>
            <person name="Lauber J."/>
            <person name="Duesterhoeft A."/>
            <person name="Beyer A."/>
            <person name="Koehrer K."/>
            <person name="Strack N."/>
            <person name="Mewes H.-W."/>
            <person name="Ottenwaelder B."/>
            <person name="Obermaier B."/>
            <person name="Tampe J."/>
            <person name="Heubner D."/>
            <person name="Wambutt R."/>
            <person name="Korn B."/>
            <person name="Klein M."/>
            <person name="Poustka A."/>
        </authorList>
    </citation>
    <scope>NUCLEOTIDE SEQUENCE [LARGE SCALE MRNA] (ISOFORM 1)</scope>
    <source>
        <tissue>Brain</tissue>
    </source>
</reference>
<reference key="2">
    <citation type="journal article" date="2004" name="Nat. Genet.">
        <title>Complete sequencing and characterization of 21,243 full-length human cDNAs.</title>
        <authorList>
            <person name="Ota T."/>
            <person name="Suzuki Y."/>
            <person name="Nishikawa T."/>
            <person name="Otsuki T."/>
            <person name="Sugiyama T."/>
            <person name="Irie R."/>
            <person name="Wakamatsu A."/>
            <person name="Hayashi K."/>
            <person name="Sato H."/>
            <person name="Nagai K."/>
            <person name="Kimura K."/>
            <person name="Makita H."/>
            <person name="Sekine M."/>
            <person name="Obayashi M."/>
            <person name="Nishi T."/>
            <person name="Shibahara T."/>
            <person name="Tanaka T."/>
            <person name="Ishii S."/>
            <person name="Yamamoto J."/>
            <person name="Saito K."/>
            <person name="Kawai Y."/>
            <person name="Isono Y."/>
            <person name="Nakamura Y."/>
            <person name="Nagahari K."/>
            <person name="Murakami K."/>
            <person name="Yasuda T."/>
            <person name="Iwayanagi T."/>
            <person name="Wagatsuma M."/>
            <person name="Shiratori A."/>
            <person name="Sudo H."/>
            <person name="Hosoiri T."/>
            <person name="Kaku Y."/>
            <person name="Kodaira H."/>
            <person name="Kondo H."/>
            <person name="Sugawara M."/>
            <person name="Takahashi M."/>
            <person name="Kanda K."/>
            <person name="Yokoi T."/>
            <person name="Furuya T."/>
            <person name="Kikkawa E."/>
            <person name="Omura Y."/>
            <person name="Abe K."/>
            <person name="Kamihara K."/>
            <person name="Katsuta N."/>
            <person name="Sato K."/>
            <person name="Tanikawa M."/>
            <person name="Yamazaki M."/>
            <person name="Ninomiya K."/>
            <person name="Ishibashi T."/>
            <person name="Yamashita H."/>
            <person name="Murakawa K."/>
            <person name="Fujimori K."/>
            <person name="Tanai H."/>
            <person name="Kimata M."/>
            <person name="Watanabe M."/>
            <person name="Hiraoka S."/>
            <person name="Chiba Y."/>
            <person name="Ishida S."/>
            <person name="Ono Y."/>
            <person name="Takiguchi S."/>
            <person name="Watanabe S."/>
            <person name="Yosida M."/>
            <person name="Hotuta T."/>
            <person name="Kusano J."/>
            <person name="Kanehori K."/>
            <person name="Takahashi-Fujii A."/>
            <person name="Hara H."/>
            <person name="Tanase T.-O."/>
            <person name="Nomura Y."/>
            <person name="Togiya S."/>
            <person name="Komai F."/>
            <person name="Hara R."/>
            <person name="Takeuchi K."/>
            <person name="Arita M."/>
            <person name="Imose N."/>
            <person name="Musashino K."/>
            <person name="Yuuki H."/>
            <person name="Oshima A."/>
            <person name="Sasaki N."/>
            <person name="Aotsuka S."/>
            <person name="Yoshikawa Y."/>
            <person name="Matsunawa H."/>
            <person name="Ichihara T."/>
            <person name="Shiohata N."/>
            <person name="Sano S."/>
            <person name="Moriya S."/>
            <person name="Momiyama H."/>
            <person name="Satoh N."/>
            <person name="Takami S."/>
            <person name="Terashima Y."/>
            <person name="Suzuki O."/>
            <person name="Nakagawa S."/>
            <person name="Senoh A."/>
            <person name="Mizoguchi H."/>
            <person name="Goto Y."/>
            <person name="Shimizu F."/>
            <person name="Wakebe H."/>
            <person name="Hishigaki H."/>
            <person name="Watanabe T."/>
            <person name="Sugiyama A."/>
            <person name="Takemoto M."/>
            <person name="Kawakami B."/>
            <person name="Yamazaki M."/>
            <person name="Watanabe K."/>
            <person name="Kumagai A."/>
            <person name="Itakura S."/>
            <person name="Fukuzumi Y."/>
            <person name="Fujimori Y."/>
            <person name="Komiyama M."/>
            <person name="Tashiro H."/>
            <person name="Tanigami A."/>
            <person name="Fujiwara T."/>
            <person name="Ono T."/>
            <person name="Yamada K."/>
            <person name="Fujii Y."/>
            <person name="Ozaki K."/>
            <person name="Hirao M."/>
            <person name="Ohmori Y."/>
            <person name="Kawabata A."/>
            <person name="Hikiji T."/>
            <person name="Kobatake N."/>
            <person name="Inagaki H."/>
            <person name="Ikema Y."/>
            <person name="Okamoto S."/>
            <person name="Okitani R."/>
            <person name="Kawakami T."/>
            <person name="Noguchi S."/>
            <person name="Itoh T."/>
            <person name="Shigeta K."/>
            <person name="Senba T."/>
            <person name="Matsumura K."/>
            <person name="Nakajima Y."/>
            <person name="Mizuno T."/>
            <person name="Morinaga M."/>
            <person name="Sasaki M."/>
            <person name="Togashi T."/>
            <person name="Oyama M."/>
            <person name="Hata H."/>
            <person name="Watanabe M."/>
            <person name="Komatsu T."/>
            <person name="Mizushima-Sugano J."/>
            <person name="Satoh T."/>
            <person name="Shirai Y."/>
            <person name="Takahashi Y."/>
            <person name="Nakagawa K."/>
            <person name="Okumura K."/>
            <person name="Nagase T."/>
            <person name="Nomura N."/>
            <person name="Kikuchi H."/>
            <person name="Masuho Y."/>
            <person name="Yamashita R."/>
            <person name="Nakai K."/>
            <person name="Yada T."/>
            <person name="Nakamura Y."/>
            <person name="Ohara O."/>
            <person name="Isogai T."/>
            <person name="Sugano S."/>
        </authorList>
    </citation>
    <scope>NUCLEOTIDE SEQUENCE [LARGE SCALE MRNA] (ISOFORMS 1 AND 2)</scope>
    <source>
        <tissue>Placenta</tissue>
    </source>
</reference>
<reference key="3">
    <citation type="journal article" date="2003" name="Nature">
        <title>The DNA sequence of human chromosome 7.</title>
        <authorList>
            <person name="Hillier L.W."/>
            <person name="Fulton R.S."/>
            <person name="Fulton L.A."/>
            <person name="Graves T.A."/>
            <person name="Pepin K.H."/>
            <person name="Wagner-McPherson C."/>
            <person name="Layman D."/>
            <person name="Maas J."/>
            <person name="Jaeger S."/>
            <person name="Walker R."/>
            <person name="Wylie K."/>
            <person name="Sekhon M."/>
            <person name="Becker M.C."/>
            <person name="O'Laughlin M.D."/>
            <person name="Schaller M.E."/>
            <person name="Fewell G.A."/>
            <person name="Delehaunty K.D."/>
            <person name="Miner T.L."/>
            <person name="Nash W.E."/>
            <person name="Cordes M."/>
            <person name="Du H."/>
            <person name="Sun H."/>
            <person name="Edwards J."/>
            <person name="Bradshaw-Cordum H."/>
            <person name="Ali J."/>
            <person name="Andrews S."/>
            <person name="Isak A."/>
            <person name="Vanbrunt A."/>
            <person name="Nguyen C."/>
            <person name="Du F."/>
            <person name="Lamar B."/>
            <person name="Courtney L."/>
            <person name="Kalicki J."/>
            <person name="Ozersky P."/>
            <person name="Bielicki L."/>
            <person name="Scott K."/>
            <person name="Holmes A."/>
            <person name="Harkins R."/>
            <person name="Harris A."/>
            <person name="Strong C.M."/>
            <person name="Hou S."/>
            <person name="Tomlinson C."/>
            <person name="Dauphin-Kohlberg S."/>
            <person name="Kozlowicz-Reilly A."/>
            <person name="Leonard S."/>
            <person name="Rohlfing T."/>
            <person name="Rock S.M."/>
            <person name="Tin-Wollam A.-M."/>
            <person name="Abbott A."/>
            <person name="Minx P."/>
            <person name="Maupin R."/>
            <person name="Strowmatt C."/>
            <person name="Latreille P."/>
            <person name="Miller N."/>
            <person name="Johnson D."/>
            <person name="Murray J."/>
            <person name="Woessner J.P."/>
            <person name="Wendl M.C."/>
            <person name="Yang S.-P."/>
            <person name="Schultz B.R."/>
            <person name="Wallis J.W."/>
            <person name="Spieth J."/>
            <person name="Bieri T.A."/>
            <person name="Nelson J.O."/>
            <person name="Berkowicz N."/>
            <person name="Wohldmann P.E."/>
            <person name="Cook L.L."/>
            <person name="Hickenbotham M.T."/>
            <person name="Eldred J."/>
            <person name="Williams D."/>
            <person name="Bedell J.A."/>
            <person name="Mardis E.R."/>
            <person name="Clifton S.W."/>
            <person name="Chissoe S.L."/>
            <person name="Marra M.A."/>
            <person name="Raymond C."/>
            <person name="Haugen E."/>
            <person name="Gillett W."/>
            <person name="Zhou Y."/>
            <person name="James R."/>
            <person name="Phelps K."/>
            <person name="Iadanoto S."/>
            <person name="Bubb K."/>
            <person name="Simms E."/>
            <person name="Levy R."/>
            <person name="Clendenning J."/>
            <person name="Kaul R."/>
            <person name="Kent W.J."/>
            <person name="Furey T.S."/>
            <person name="Baertsch R.A."/>
            <person name="Brent M.R."/>
            <person name="Keibler E."/>
            <person name="Flicek P."/>
            <person name="Bork P."/>
            <person name="Suyama M."/>
            <person name="Bailey J.A."/>
            <person name="Portnoy M.E."/>
            <person name="Torrents D."/>
            <person name="Chinwalla A.T."/>
            <person name="Gish W.R."/>
            <person name="Eddy S.R."/>
            <person name="McPherson J.D."/>
            <person name="Olson M.V."/>
            <person name="Eichler E.E."/>
            <person name="Green E.D."/>
            <person name="Waterston R.H."/>
            <person name="Wilson R.K."/>
        </authorList>
    </citation>
    <scope>NUCLEOTIDE SEQUENCE [LARGE SCALE GENOMIC DNA]</scope>
</reference>
<reference key="4">
    <citation type="journal article" date="2003" name="Science">
        <title>Human chromosome 7: DNA sequence and biology.</title>
        <authorList>
            <person name="Scherer S.W."/>
            <person name="Cheung J."/>
            <person name="MacDonald J.R."/>
            <person name="Osborne L.R."/>
            <person name="Nakabayashi K."/>
            <person name="Herbrick J.-A."/>
            <person name="Carson A.R."/>
            <person name="Parker-Katiraee L."/>
            <person name="Skaug J."/>
            <person name="Khaja R."/>
            <person name="Zhang J."/>
            <person name="Hudek A.K."/>
            <person name="Li M."/>
            <person name="Haddad M."/>
            <person name="Duggan G.E."/>
            <person name="Fernandez B.A."/>
            <person name="Kanematsu E."/>
            <person name="Gentles S."/>
            <person name="Christopoulos C.C."/>
            <person name="Choufani S."/>
            <person name="Kwasnicka D."/>
            <person name="Zheng X.H."/>
            <person name="Lai Z."/>
            <person name="Nusskern D.R."/>
            <person name="Zhang Q."/>
            <person name="Gu Z."/>
            <person name="Lu F."/>
            <person name="Zeesman S."/>
            <person name="Nowaczyk M.J."/>
            <person name="Teshima I."/>
            <person name="Chitayat D."/>
            <person name="Shuman C."/>
            <person name="Weksberg R."/>
            <person name="Zackai E.H."/>
            <person name="Grebe T.A."/>
            <person name="Cox S.R."/>
            <person name="Kirkpatrick S.J."/>
            <person name="Rahman N."/>
            <person name="Friedman J.M."/>
            <person name="Heng H.H.Q."/>
            <person name="Pelicci P.G."/>
            <person name="Lo-Coco F."/>
            <person name="Belloni E."/>
            <person name="Shaffer L.G."/>
            <person name="Pober B."/>
            <person name="Morton C.C."/>
            <person name="Gusella J.F."/>
            <person name="Bruns G.A.P."/>
            <person name="Korf B.R."/>
            <person name="Quade B.J."/>
            <person name="Ligon A.H."/>
            <person name="Ferguson H."/>
            <person name="Higgins A.W."/>
            <person name="Leach N.T."/>
            <person name="Herrick S.R."/>
            <person name="Lemyre E."/>
            <person name="Farra C.G."/>
            <person name="Kim H.-G."/>
            <person name="Summers A.M."/>
            <person name="Gripp K.W."/>
            <person name="Roberts W."/>
            <person name="Szatmari P."/>
            <person name="Winsor E.J.T."/>
            <person name="Grzeschik K.-H."/>
            <person name="Teebi A."/>
            <person name="Minassian B.A."/>
            <person name="Kere J."/>
            <person name="Armengol L."/>
            <person name="Pujana M.A."/>
            <person name="Estivill X."/>
            <person name="Wilson M.D."/>
            <person name="Koop B.F."/>
            <person name="Tosi S."/>
            <person name="Moore G.E."/>
            <person name="Boright A.P."/>
            <person name="Zlotorynski E."/>
            <person name="Kerem B."/>
            <person name="Kroisel P.M."/>
            <person name="Petek E."/>
            <person name="Oscier D.G."/>
            <person name="Mould S.J."/>
            <person name="Doehner H."/>
            <person name="Doehner K."/>
            <person name="Rommens J.M."/>
            <person name="Vincent J.B."/>
            <person name="Venter J.C."/>
            <person name="Li P.W."/>
            <person name="Mural R.J."/>
            <person name="Adams M.D."/>
            <person name="Tsui L.-C."/>
        </authorList>
    </citation>
    <scope>NUCLEOTIDE SEQUENCE [LARGE SCALE GENOMIC DNA]</scope>
</reference>
<reference key="5">
    <citation type="submission" date="2005-09" db="EMBL/GenBank/DDBJ databases">
        <authorList>
            <person name="Mural R.J."/>
            <person name="Istrail S."/>
            <person name="Sutton G.G."/>
            <person name="Florea L."/>
            <person name="Halpern A.L."/>
            <person name="Mobarry C.M."/>
            <person name="Lippert R."/>
            <person name="Walenz B."/>
            <person name="Shatkay H."/>
            <person name="Dew I."/>
            <person name="Miller J.R."/>
            <person name="Flanigan M.J."/>
            <person name="Edwards N.J."/>
            <person name="Bolanos R."/>
            <person name="Fasulo D."/>
            <person name="Halldorsson B.V."/>
            <person name="Hannenhalli S."/>
            <person name="Turner R."/>
            <person name="Yooseph S."/>
            <person name="Lu F."/>
            <person name="Nusskern D.R."/>
            <person name="Shue B.C."/>
            <person name="Zheng X.H."/>
            <person name="Zhong F."/>
            <person name="Delcher A.L."/>
            <person name="Huson D.H."/>
            <person name="Kravitz S.A."/>
            <person name="Mouchard L."/>
            <person name="Reinert K."/>
            <person name="Remington K.A."/>
            <person name="Clark A.G."/>
            <person name="Waterman M.S."/>
            <person name="Eichler E.E."/>
            <person name="Adams M.D."/>
            <person name="Hunkapiller M.W."/>
            <person name="Myers E.W."/>
            <person name="Venter J.C."/>
        </authorList>
    </citation>
    <scope>NUCLEOTIDE SEQUENCE [LARGE SCALE GENOMIC DNA]</scope>
</reference>
<reference key="6">
    <citation type="journal article" date="2004" name="Genome Res.">
        <title>The status, quality, and expansion of the NIH full-length cDNA project: the Mammalian Gene Collection (MGC).</title>
        <authorList>
            <consortium name="The MGC Project Team"/>
        </authorList>
    </citation>
    <scope>NUCLEOTIDE SEQUENCE [LARGE SCALE MRNA] OF 213-697 (ISOFORM 1)</scope>
    <source>
        <tissue>Prostate</tissue>
    </source>
</reference>
<reference key="7">
    <citation type="journal article" date="2019" name="Oncol. Res.">
        <title>Inhibition of Proliferation by Knockdown of Transmembrane (TMEM) 168 in Glioblastoma Cells via Suppression of Wnt/beta-Catenin Pathway.</title>
        <authorList>
            <person name="Xu J."/>
            <person name="Su Z."/>
            <person name="Ding Q."/>
            <person name="Shen L."/>
            <person name="Nie X."/>
            <person name="Pan X."/>
            <person name="Yan A."/>
            <person name="Yan R."/>
            <person name="Zhou Y."/>
            <person name="Li L."/>
            <person name="Lu B."/>
        </authorList>
    </citation>
    <scope>INDUCTION</scope>
</reference>
<reference key="8">
    <citation type="journal article" date="2020" name="FASEB J.">
        <title>Identification of transmembrane protein 168 mutation in familial Brugada syndrome.</title>
        <authorList>
            <person name="Shimizu A."/>
            <person name="Zankov D.P."/>
            <person name="Sato A."/>
            <person name="Komeno M."/>
            <person name="Toyoda F."/>
            <person name="Yamazaki S."/>
            <person name="Makita T."/>
            <person name="Noda T."/>
            <person name="Ikawa M."/>
            <person name="Asano Y."/>
            <person name="Miyashita Y."/>
            <person name="Takashima S."/>
            <person name="Morita H."/>
            <person name="Ishikawa T."/>
            <person name="Makita N."/>
            <person name="Hitosugi M."/>
            <person name="Matsuura H."/>
            <person name="Ohno S."/>
            <person name="Horie M."/>
            <person name="Ogita H."/>
        </authorList>
    </citation>
    <scope>VARIANT GLN-539</scope>
    <scope>SUBCELLULAR LOCATION</scope>
    <scope>FUNCTION</scope>
    <scope>CHARACTERIZATION OF VARIANT GLN-539</scope>
</reference>
<dbReference type="EMBL" id="AL136626">
    <property type="protein sequence ID" value="CAB66561.1"/>
    <property type="molecule type" value="mRNA"/>
</dbReference>
<dbReference type="EMBL" id="AK023638">
    <property type="protein sequence ID" value="BAB14624.1"/>
    <property type="status" value="ALT_INIT"/>
    <property type="molecule type" value="mRNA"/>
</dbReference>
<dbReference type="EMBL" id="AK293311">
    <property type="protein sequence ID" value="BAG56831.1"/>
    <property type="molecule type" value="mRNA"/>
</dbReference>
<dbReference type="EMBL" id="AK314460">
    <property type="protein sequence ID" value="BAG37068.1"/>
    <property type="molecule type" value="mRNA"/>
</dbReference>
<dbReference type="EMBL" id="AC079621">
    <property type="protein sequence ID" value="AAQ96836.1"/>
    <property type="status" value="ALT_INIT"/>
    <property type="molecule type" value="Genomic_DNA"/>
</dbReference>
<dbReference type="EMBL" id="CH236947">
    <property type="protein sequence ID" value="EAL24373.1"/>
    <property type="molecule type" value="Genomic_DNA"/>
</dbReference>
<dbReference type="EMBL" id="CH471070">
    <property type="protein sequence ID" value="EAW83470.1"/>
    <property type="molecule type" value="Genomic_DNA"/>
</dbReference>
<dbReference type="EMBL" id="CH471070">
    <property type="protein sequence ID" value="EAW83471.1"/>
    <property type="molecule type" value="Genomic_DNA"/>
</dbReference>
<dbReference type="EMBL" id="BC030804">
    <property type="protein sequence ID" value="AAH30804.2"/>
    <property type="molecule type" value="mRNA"/>
</dbReference>
<dbReference type="CCDS" id="CCDS5757.1">
    <molecule id="Q9H0V1-1"/>
</dbReference>
<dbReference type="RefSeq" id="NP_001274426.1">
    <molecule id="Q9H0V1-1"/>
    <property type="nucleotide sequence ID" value="NM_001287497.2"/>
</dbReference>
<dbReference type="RefSeq" id="NP_071929.3">
    <molecule id="Q9H0V1-1"/>
    <property type="nucleotide sequence ID" value="NM_022484.5"/>
</dbReference>
<dbReference type="RefSeq" id="XP_016868012.1">
    <molecule id="Q9H0V1-1"/>
    <property type="nucleotide sequence ID" value="XM_017012523.3"/>
</dbReference>
<dbReference type="RefSeq" id="XP_016868014.1">
    <property type="nucleotide sequence ID" value="XM_017012525.1"/>
</dbReference>
<dbReference type="RefSeq" id="XP_047276666.1">
    <molecule id="Q9H0V1-1"/>
    <property type="nucleotide sequence ID" value="XM_047420710.1"/>
</dbReference>
<dbReference type="RefSeq" id="XP_054214778.1">
    <molecule id="Q9H0V1-1"/>
    <property type="nucleotide sequence ID" value="XM_054358803.1"/>
</dbReference>
<dbReference type="RefSeq" id="XP_054214779.1">
    <molecule id="Q9H0V1-1"/>
    <property type="nucleotide sequence ID" value="XM_054358804.1"/>
</dbReference>
<dbReference type="BioGRID" id="122167">
    <property type="interactions" value="16"/>
</dbReference>
<dbReference type="FunCoup" id="Q9H0V1">
    <property type="interactions" value="1215"/>
</dbReference>
<dbReference type="IntAct" id="Q9H0V1">
    <property type="interactions" value="9"/>
</dbReference>
<dbReference type="STRING" id="9606.ENSP00000323068"/>
<dbReference type="TCDB" id="8.A.171.1.1">
    <property type="family name" value="the transmembrane protein 168 (tmem168) family"/>
</dbReference>
<dbReference type="GlyCosmos" id="Q9H0V1">
    <property type="glycosylation" value="3 sites, No reported glycans"/>
</dbReference>
<dbReference type="GlyGen" id="Q9H0V1">
    <property type="glycosylation" value="3 sites"/>
</dbReference>
<dbReference type="iPTMnet" id="Q9H0V1"/>
<dbReference type="PhosphoSitePlus" id="Q9H0V1"/>
<dbReference type="SwissPalm" id="Q9H0V1"/>
<dbReference type="BioMuta" id="TMEM168"/>
<dbReference type="DMDM" id="145566969"/>
<dbReference type="jPOST" id="Q9H0V1"/>
<dbReference type="MassIVE" id="Q9H0V1"/>
<dbReference type="PaxDb" id="9606-ENSP00000323068"/>
<dbReference type="PeptideAtlas" id="Q9H0V1"/>
<dbReference type="ProteomicsDB" id="3886"/>
<dbReference type="ProteomicsDB" id="80328">
    <molecule id="Q9H0V1-1"/>
</dbReference>
<dbReference type="Antibodypedia" id="17378">
    <property type="antibodies" value="93 antibodies from 18 providers"/>
</dbReference>
<dbReference type="DNASU" id="64418"/>
<dbReference type="Ensembl" id="ENST00000312814.11">
    <molecule id="Q9H0V1-1"/>
    <property type="protein sequence ID" value="ENSP00000323068.4"/>
    <property type="gene ID" value="ENSG00000146802.13"/>
</dbReference>
<dbReference type="Ensembl" id="ENST00000447395.5">
    <molecule id="Q9H0V1-2"/>
    <property type="protein sequence ID" value="ENSP00000410307.1"/>
    <property type="gene ID" value="ENSG00000146802.13"/>
</dbReference>
<dbReference type="Ensembl" id="ENST00000454074.5">
    <molecule id="Q9H0V1-1"/>
    <property type="protein sequence ID" value="ENSP00000390696.1"/>
    <property type="gene ID" value="ENSG00000146802.13"/>
</dbReference>
<dbReference type="GeneID" id="64418"/>
<dbReference type="KEGG" id="hsa:64418"/>
<dbReference type="MANE-Select" id="ENST00000312814.11">
    <property type="protein sequence ID" value="ENSP00000323068.4"/>
    <property type="RefSeq nucleotide sequence ID" value="NM_022484.6"/>
    <property type="RefSeq protein sequence ID" value="NP_071929.3"/>
</dbReference>
<dbReference type="UCSC" id="uc003vgn.5">
    <molecule id="Q9H0V1-1"/>
    <property type="organism name" value="human"/>
</dbReference>
<dbReference type="AGR" id="HGNC:25826"/>
<dbReference type="CTD" id="64418"/>
<dbReference type="DisGeNET" id="64418"/>
<dbReference type="GeneCards" id="TMEM168"/>
<dbReference type="HGNC" id="HGNC:25826">
    <property type="gene designation" value="TMEM168"/>
</dbReference>
<dbReference type="HPA" id="ENSG00000146802">
    <property type="expression patterns" value="Low tissue specificity"/>
</dbReference>
<dbReference type="neXtProt" id="NX_Q9H0V1"/>
<dbReference type="OpenTargets" id="ENSG00000146802"/>
<dbReference type="PharmGKB" id="PA147357253"/>
<dbReference type="VEuPathDB" id="HostDB:ENSG00000146802"/>
<dbReference type="eggNOG" id="ENOG502QRB6">
    <property type="taxonomic scope" value="Eukaryota"/>
</dbReference>
<dbReference type="GeneTree" id="ENSGT00390000005941"/>
<dbReference type="HOGENOM" id="CLU_032315_0_0_1"/>
<dbReference type="InParanoid" id="Q9H0V1"/>
<dbReference type="OMA" id="VNDQYIA"/>
<dbReference type="OrthoDB" id="5967342at2759"/>
<dbReference type="PAN-GO" id="Q9H0V1">
    <property type="GO annotations" value="0 GO annotations based on evolutionary models"/>
</dbReference>
<dbReference type="PhylomeDB" id="Q9H0V1"/>
<dbReference type="TreeFam" id="TF328518"/>
<dbReference type="PathwayCommons" id="Q9H0V1"/>
<dbReference type="SignaLink" id="Q9H0V1"/>
<dbReference type="BioGRID-ORCS" id="64418">
    <property type="hits" value="21 hits in 1161 CRISPR screens"/>
</dbReference>
<dbReference type="ChiTaRS" id="TMEM168">
    <property type="organism name" value="human"/>
</dbReference>
<dbReference type="GenomeRNAi" id="64418"/>
<dbReference type="Pharos" id="Q9H0V1">
    <property type="development level" value="Tdark"/>
</dbReference>
<dbReference type="PRO" id="PR:Q9H0V1"/>
<dbReference type="Proteomes" id="UP000005640">
    <property type="component" value="Chromosome 7"/>
</dbReference>
<dbReference type="RNAct" id="Q9H0V1">
    <property type="molecule type" value="protein"/>
</dbReference>
<dbReference type="Bgee" id="ENSG00000146802">
    <property type="expression patterns" value="Expressed in mucosa of sigmoid colon and 199 other cell types or tissues"/>
</dbReference>
<dbReference type="ExpressionAtlas" id="Q9H0V1">
    <property type="expression patterns" value="baseline and differential"/>
</dbReference>
<dbReference type="GO" id="GO:0031965">
    <property type="term" value="C:nuclear membrane"/>
    <property type="evidence" value="ECO:0000314"/>
    <property type="project" value="UniProtKB"/>
</dbReference>
<dbReference type="GO" id="GO:0030133">
    <property type="term" value="C:transport vesicle"/>
    <property type="evidence" value="ECO:0000314"/>
    <property type="project" value="LIFEdb"/>
</dbReference>
<dbReference type="GO" id="GO:0017080">
    <property type="term" value="F:sodium channel regulator activity"/>
    <property type="evidence" value="ECO:0000315"/>
    <property type="project" value="UniProtKB"/>
</dbReference>
<dbReference type="GO" id="GO:2000058">
    <property type="term" value="P:regulation of ubiquitin-dependent protein catabolic process"/>
    <property type="evidence" value="ECO:0007669"/>
    <property type="project" value="Ensembl"/>
</dbReference>
<dbReference type="CDD" id="cd21494">
    <property type="entry name" value="TMEM168"/>
    <property type="match status" value="1"/>
</dbReference>
<dbReference type="InterPro" id="IPR029713">
    <property type="entry name" value="TMEM168"/>
</dbReference>
<dbReference type="PANTHER" id="PTHR14437">
    <property type="entry name" value="TRANSMEMBRANE PROTEIN 168"/>
    <property type="match status" value="1"/>
</dbReference>
<dbReference type="PANTHER" id="PTHR14437:SF2">
    <property type="entry name" value="TRANSMEMBRANE PROTEIN 168"/>
    <property type="match status" value="1"/>
</dbReference>
<sequence>MCKSLRYCFSHCLYLAMTRLEEVNREVNMHSSVRYLGYLARINLLVAICLGLYVRWEKTANSLILVIFILGLFVLGIASILYYYFSMEAASLSLSNLWFGFLLGLLCFLDNSSFKNDVKEESTKYLLLTSIVLRILCSLVERISGYVRHRPTLLTTVEFLELVGFAIASTTMLVEKSLSVILLVVALAMLIIDLRMKSFLAIPNLVIFAVLLFFSSLETPKNPIAFACFFICLITDPFLDIYFSGLSVTERWKPFLYRGRICRRLSVVFAGMIELTFFILSAFKLRDTHLWYFVIPGFSIFGIFWMICHIIFLLTLWGFHTKLNDCHKVYFTHRTDYNSLDRIMASKGMRHFCLISEQLVFFSLLATAILGAVSWQPTNGIFLSMFLIVLPLESMAHGLFHELGNCLGGTSVGYAIVIPTNFCSPDGQPTLLPPEHVQELNLRSTGMLNAIQRFFAYHMIETYGCDYSTSGLSFDTLHSKLKAFLELRTVDGPRHDTYILYYSGHTHGTGEWALAGGDTLRLDTLIEWWREKNGSFCSRLIIVLDSENSTPWVKEVRKINDQYIAVQGAELIKTVDIEEADPPQLGDFTKDWVEYNCNSSNNICWTEKGRTVKAVYGVSKRWSDYTLHLPTGSDVAKHWMLHFPRITYPLVHLANWLCGLNLFWICKTCFRCLKRLKMSWFLPTVLDTGQGFKLVKS</sequence>
<feature type="chain" id="PRO_0000284630" description="Transmembrane protein 168">
    <location>
        <begin position="1"/>
        <end position="697"/>
    </location>
</feature>
<feature type="transmembrane region" description="Helical" evidence="2">
    <location>
        <begin position="36"/>
        <end position="56"/>
    </location>
</feature>
<feature type="transmembrane region" description="Helical" evidence="2">
    <location>
        <begin position="63"/>
        <end position="83"/>
    </location>
</feature>
<feature type="transmembrane region" description="Helical" evidence="2">
    <location>
        <begin position="89"/>
        <end position="109"/>
    </location>
</feature>
<feature type="transmembrane region" description="Helical" evidence="2">
    <location>
        <begin position="172"/>
        <end position="192"/>
    </location>
</feature>
<feature type="transmembrane region" description="Helical" evidence="2">
    <location>
        <begin position="199"/>
        <end position="219"/>
    </location>
</feature>
<feature type="transmembrane region" description="Helical" evidence="2">
    <location>
        <begin position="223"/>
        <end position="243"/>
    </location>
</feature>
<feature type="transmembrane region" description="Helical" evidence="2">
    <location>
        <begin position="265"/>
        <end position="285"/>
    </location>
</feature>
<feature type="transmembrane region" description="Helical" evidence="2">
    <location>
        <begin position="293"/>
        <end position="313"/>
    </location>
</feature>
<feature type="transmembrane region" description="Helical" evidence="2">
    <location>
        <begin position="352"/>
        <end position="372"/>
    </location>
</feature>
<feature type="transmembrane region" description="Helical" evidence="2">
    <location>
        <begin position="380"/>
        <end position="400"/>
    </location>
</feature>
<feature type="transmembrane region" description="Helical" evidence="2">
    <location>
        <begin position="646"/>
        <end position="666"/>
    </location>
</feature>
<feature type="glycosylation site" description="N-linked (GlcNAc...) asparagine" evidence="2">
    <location>
        <position position="111"/>
    </location>
</feature>
<feature type="glycosylation site" description="N-linked (GlcNAc...) asparagine" evidence="2">
    <location>
        <position position="533"/>
    </location>
</feature>
<feature type="glycosylation site" description="N-linked (GlcNAc...) asparagine" evidence="2">
    <location>
        <position position="598"/>
    </location>
</feature>
<feature type="splice variant" id="VSP_056846" description="In isoform 2." evidence="5">
    <location>
        <begin position="1"/>
        <end position="384"/>
    </location>
</feature>
<feature type="sequence variant" id="VAR_087377" description="Found in a family diagnosed with inherited Brugada syndrome; uncertain significance; does not affect nuclear membrane localization. Reduces cardiomyocyte cell surface expression of SCN5A. Decreases in Na(+) current in cardiomyocytes." evidence="4">
    <original>R</original>
    <variation>Q</variation>
    <location>
        <position position="539"/>
    </location>
</feature>
<feature type="sequence conflict" description="In Ref. 1; CAB66561." evidence="6" ref="1">
    <original>W</original>
    <variation>R</variation>
    <location>
        <position position="305"/>
    </location>
</feature>
<feature type="sequence conflict" description="In Ref. 2; BAB14624." evidence="6" ref="2">
    <original>H</original>
    <variation>P</variation>
    <location>
        <position position="333"/>
    </location>
</feature>
<feature type="sequence conflict" description="In Ref. 2; BAB14624." evidence="6" ref="2">
    <original>T</original>
    <variation>A</variation>
    <location>
        <position position="574"/>
    </location>
</feature>
<feature type="sequence conflict" description="In Ref. 1; CAB66561." evidence="6" ref="1">
    <original>S</original>
    <variation>C</variation>
    <location>
        <position position="600"/>
    </location>
</feature>